<comment type="function">
    <text evidence="1">Positively regulates the activity of the minus-end directed microtubule motor protein dynein. May enhance dynein-mediated microtubule sliding by targeting dynein to the microtubule plus end. Required for nuclear migration during vegetative growth as well as development. Required for retrograde early endosome (EE) transport from the hyphal tip. Required for localization of dynein to the mitotic spindle poles. Recruits additional proteins to the dynein complex at SPBs.</text>
</comment>
<comment type="subunit">
    <text evidence="1">Self-associates. Interacts with NDL1 and dynein.</text>
</comment>
<comment type="subcellular location">
    <subcellularLocation>
        <location evidence="1">Cytoplasm</location>
        <location evidence="1">Cytoskeleton</location>
    </subcellularLocation>
    <subcellularLocation>
        <location evidence="1">Cytoplasm</location>
        <location evidence="1">Cytoskeleton</location>
        <location evidence="1">Spindle pole</location>
    </subcellularLocation>
    <text evidence="1">Localizes to the plus ends of microtubules at the hyphal tip and the mitotic spindle poles.</text>
</comment>
<comment type="similarity">
    <text evidence="1">Belongs to the WD repeat LIS1/nudF family.</text>
</comment>
<organism>
    <name type="scientific">Uncinocarpus reesii (strain UAMH 1704)</name>
    <dbReference type="NCBI Taxonomy" id="336963"/>
    <lineage>
        <taxon>Eukaryota</taxon>
        <taxon>Fungi</taxon>
        <taxon>Dikarya</taxon>
        <taxon>Ascomycota</taxon>
        <taxon>Pezizomycotina</taxon>
        <taxon>Eurotiomycetes</taxon>
        <taxon>Eurotiomycetidae</taxon>
        <taxon>Onygenales</taxon>
        <taxon>Onygenaceae</taxon>
        <taxon>Uncinocarpus</taxon>
    </lineage>
</organism>
<feature type="chain" id="PRO_0000405112" description="Nuclear distribution protein PAC1-2">
    <location>
        <begin position="1"/>
        <end position="459"/>
    </location>
</feature>
<feature type="repeat" description="WD 1">
    <location>
        <begin position="108"/>
        <end position="149"/>
    </location>
</feature>
<feature type="repeat" description="WD 2">
    <location>
        <begin position="151"/>
        <end position="191"/>
    </location>
</feature>
<feature type="repeat" description="WD 3">
    <location>
        <begin position="195"/>
        <end position="244"/>
    </location>
</feature>
<feature type="repeat" description="WD 4">
    <location>
        <begin position="246"/>
        <end position="284"/>
    </location>
</feature>
<feature type="repeat" description="WD 5">
    <location>
        <begin position="306"/>
        <end position="348"/>
    </location>
</feature>
<feature type="repeat" description="WD 6">
    <location>
        <begin position="350"/>
        <end position="389"/>
    </location>
</feature>
<feature type="repeat" description="WD 7">
    <location>
        <begin position="394"/>
        <end position="438"/>
    </location>
</feature>
<feature type="repeat" description="WD 8">
    <location>
        <begin position="440"/>
        <end position="459"/>
    </location>
</feature>
<feature type="coiled-coil region" evidence="1">
    <location>
        <begin position="56"/>
        <end position="83"/>
    </location>
</feature>
<protein>
    <recommendedName>
        <fullName evidence="1">Nuclear distribution protein PAC1-2</fullName>
    </recommendedName>
    <alternativeName>
        <fullName evidence="1">Lissencephaly-1 homolog 2</fullName>
        <shortName evidence="1">LIS-1 2</shortName>
    </alternativeName>
    <alternativeName>
        <fullName evidence="1">nudF homolog 2</fullName>
    </alternativeName>
</protein>
<accession>C4JPW9</accession>
<proteinExistence type="inferred from homology"/>
<name>LIS12_UNCRE</name>
<dbReference type="EMBL" id="CH476616">
    <property type="protein sequence ID" value="EEP79766.1"/>
    <property type="molecule type" value="Genomic_DNA"/>
</dbReference>
<dbReference type="RefSeq" id="XP_002545095.1">
    <property type="nucleotide sequence ID" value="XM_002545049.1"/>
</dbReference>
<dbReference type="SMR" id="C4JPW9"/>
<dbReference type="FunCoup" id="C4JPW9">
    <property type="interactions" value="42"/>
</dbReference>
<dbReference type="STRING" id="336963.C4JPW9"/>
<dbReference type="GeneID" id="8440810"/>
<dbReference type="KEGG" id="ure:UREG_04612"/>
<dbReference type="VEuPathDB" id="FungiDB:UREG_04612"/>
<dbReference type="eggNOG" id="KOG0295">
    <property type="taxonomic scope" value="Eukaryota"/>
</dbReference>
<dbReference type="HOGENOM" id="CLU_000288_57_15_1"/>
<dbReference type="InParanoid" id="C4JPW9"/>
<dbReference type="OMA" id="RGTCLMT"/>
<dbReference type="OrthoDB" id="10264588at2759"/>
<dbReference type="Proteomes" id="UP000002058">
    <property type="component" value="Unassembled WGS sequence"/>
</dbReference>
<dbReference type="GO" id="GO:0005737">
    <property type="term" value="C:cytoplasm"/>
    <property type="evidence" value="ECO:0007669"/>
    <property type="project" value="UniProtKB-UniRule"/>
</dbReference>
<dbReference type="GO" id="GO:0005874">
    <property type="term" value="C:microtubule"/>
    <property type="evidence" value="ECO:0007669"/>
    <property type="project" value="UniProtKB-KW"/>
</dbReference>
<dbReference type="GO" id="GO:0005875">
    <property type="term" value="C:microtubule associated complex"/>
    <property type="evidence" value="ECO:0007669"/>
    <property type="project" value="UniProtKB-UniRule"/>
</dbReference>
<dbReference type="GO" id="GO:0000922">
    <property type="term" value="C:spindle pole"/>
    <property type="evidence" value="ECO:0007669"/>
    <property type="project" value="UniProtKB-SubCell"/>
</dbReference>
<dbReference type="GO" id="GO:1990234">
    <property type="term" value="C:transferase complex"/>
    <property type="evidence" value="ECO:0007669"/>
    <property type="project" value="UniProtKB-ARBA"/>
</dbReference>
<dbReference type="GO" id="GO:0070840">
    <property type="term" value="F:dynein complex binding"/>
    <property type="evidence" value="ECO:0007669"/>
    <property type="project" value="UniProtKB-UniRule"/>
</dbReference>
<dbReference type="GO" id="GO:0051301">
    <property type="term" value="P:cell division"/>
    <property type="evidence" value="ECO:0007669"/>
    <property type="project" value="UniProtKB-KW"/>
</dbReference>
<dbReference type="GO" id="GO:0000132">
    <property type="term" value="P:establishment of mitotic spindle orientation"/>
    <property type="evidence" value="ECO:0007669"/>
    <property type="project" value="UniProtKB-UniRule"/>
</dbReference>
<dbReference type="GO" id="GO:0051012">
    <property type="term" value="P:microtubule sliding"/>
    <property type="evidence" value="ECO:0007669"/>
    <property type="project" value="UniProtKB-UniRule"/>
</dbReference>
<dbReference type="CDD" id="cd00200">
    <property type="entry name" value="WD40"/>
    <property type="match status" value="1"/>
</dbReference>
<dbReference type="FunFam" id="2.130.10.10:FF:000342">
    <property type="entry name" value="Nuclear distribution protein PAC1"/>
    <property type="match status" value="1"/>
</dbReference>
<dbReference type="Gene3D" id="1.20.960.30">
    <property type="match status" value="1"/>
</dbReference>
<dbReference type="Gene3D" id="2.130.10.10">
    <property type="entry name" value="YVTN repeat-like/Quinoprotein amine dehydrogenase"/>
    <property type="match status" value="1"/>
</dbReference>
<dbReference type="HAMAP" id="MF_03141">
    <property type="entry name" value="lis1"/>
    <property type="match status" value="1"/>
</dbReference>
<dbReference type="InterPro" id="IPR017252">
    <property type="entry name" value="Dynein_regulator_LIS1"/>
</dbReference>
<dbReference type="InterPro" id="IPR020472">
    <property type="entry name" value="G-protein_beta_WD-40_rep"/>
</dbReference>
<dbReference type="InterPro" id="IPR037190">
    <property type="entry name" value="LIS1_N"/>
</dbReference>
<dbReference type="InterPro" id="IPR015943">
    <property type="entry name" value="WD40/YVTN_repeat-like_dom_sf"/>
</dbReference>
<dbReference type="InterPro" id="IPR019775">
    <property type="entry name" value="WD40_repeat_CS"/>
</dbReference>
<dbReference type="InterPro" id="IPR036322">
    <property type="entry name" value="WD40_repeat_dom_sf"/>
</dbReference>
<dbReference type="InterPro" id="IPR001680">
    <property type="entry name" value="WD40_rpt"/>
</dbReference>
<dbReference type="PANTHER" id="PTHR22847:SF637">
    <property type="entry name" value="WD REPEAT DOMAIN 5B"/>
    <property type="match status" value="1"/>
</dbReference>
<dbReference type="PANTHER" id="PTHR22847">
    <property type="entry name" value="WD40 REPEAT PROTEIN"/>
    <property type="match status" value="1"/>
</dbReference>
<dbReference type="Pfam" id="PF00400">
    <property type="entry name" value="WD40"/>
    <property type="match status" value="6"/>
</dbReference>
<dbReference type="PIRSF" id="PIRSF037647">
    <property type="entry name" value="Dynein_regulator_Lis1"/>
    <property type="match status" value="1"/>
</dbReference>
<dbReference type="PRINTS" id="PR00320">
    <property type="entry name" value="GPROTEINBRPT"/>
</dbReference>
<dbReference type="SMART" id="SM00320">
    <property type="entry name" value="WD40"/>
    <property type="match status" value="7"/>
</dbReference>
<dbReference type="SUPFAM" id="SSF109925">
    <property type="entry name" value="Lissencephaly-1 protein (Lis-1, PAF-AH alpha) N-terminal domain"/>
    <property type="match status" value="1"/>
</dbReference>
<dbReference type="SUPFAM" id="SSF50978">
    <property type="entry name" value="WD40 repeat-like"/>
    <property type="match status" value="1"/>
</dbReference>
<dbReference type="PROSITE" id="PS00678">
    <property type="entry name" value="WD_REPEATS_1"/>
    <property type="match status" value="3"/>
</dbReference>
<dbReference type="PROSITE" id="PS50082">
    <property type="entry name" value="WD_REPEATS_2"/>
    <property type="match status" value="6"/>
</dbReference>
<dbReference type="PROSITE" id="PS50294">
    <property type="entry name" value="WD_REPEATS_REGION"/>
    <property type="match status" value="1"/>
</dbReference>
<gene>
    <name evidence="1" type="primary">PAC1-2</name>
    <name evidence="1" type="synonym">LIS1-2</name>
    <name type="ORF">UREG_04612</name>
</gene>
<reference key="1">
    <citation type="journal article" date="2009" name="Genome Res.">
        <title>Comparative genomic analyses of the human fungal pathogens Coccidioides and their relatives.</title>
        <authorList>
            <person name="Sharpton T.J."/>
            <person name="Stajich J.E."/>
            <person name="Rounsley S.D."/>
            <person name="Gardner M.J."/>
            <person name="Wortman J.R."/>
            <person name="Jordar V.S."/>
            <person name="Maiti R."/>
            <person name="Kodira C.D."/>
            <person name="Neafsey D.E."/>
            <person name="Zeng Q."/>
            <person name="Hung C.-Y."/>
            <person name="McMahan C."/>
            <person name="Muszewska A."/>
            <person name="Grynberg M."/>
            <person name="Mandel M.A."/>
            <person name="Kellner E.M."/>
            <person name="Barker B.M."/>
            <person name="Galgiani J.N."/>
            <person name="Orbach M.J."/>
            <person name="Kirkland T.N."/>
            <person name="Cole G.T."/>
            <person name="Henn M.R."/>
            <person name="Birren B.W."/>
            <person name="Taylor J.W."/>
        </authorList>
    </citation>
    <scope>NUCLEOTIDE SEQUENCE [LARGE SCALE GENOMIC DNA]</scope>
    <source>
        <strain>UAMH 1704</strain>
    </source>
</reference>
<evidence type="ECO:0000255" key="1">
    <source>
        <dbReference type="HAMAP-Rule" id="MF_03141"/>
    </source>
</evidence>
<keyword id="KW-0131">Cell cycle</keyword>
<keyword id="KW-0132">Cell division</keyword>
<keyword id="KW-0175">Coiled coil</keyword>
<keyword id="KW-0963">Cytoplasm</keyword>
<keyword id="KW-0206">Cytoskeleton</keyword>
<keyword id="KW-0493">Microtubule</keyword>
<keyword id="KW-0498">Mitosis</keyword>
<keyword id="KW-1185">Reference proteome</keyword>
<keyword id="KW-0677">Repeat</keyword>
<keyword id="KW-0813">Transport</keyword>
<keyword id="KW-0853">WD repeat</keyword>
<sequence length="459" mass="50293">MKIGFWTWKSIKLSIAIPLMCSHVSSALRAELGLDEEAFGTAAAKKYETLLEKKWTSIVRLQKKIMDLESRNAALQTELANLTPTALSKRHQDPASWLPRSVRHSLESHRDTINSIAFHPIYSSLASCSDDCTIKIWDWELGELERTVKGHTRAVLDVDYGGPRSSILLASCSSDLSIKLWDPADEYKNIRTLLGHDHSVGAVRFIPSGASGTLSSGNLLVSASRDGTLRIWDVVTGYCVKTLRGHTAWVRDVCPSFDGRFLLSAGDDMTTRLWNISGSNSDHKLTMLGHEHVIECCALAPFASYQYLAALTGLKAPPASSAAEFMATGSRDKTIKLWDAHGRCLGTLIGHDNWVRALAFHPGGKYLLSVSDDKTLRCWDLSQGGKCVKTLKDAHERFITCLRWAPGIFKNVPGVSTRDANGESNGVLNTGLKGDTPDVQVRCVIATGGVDKKLQVFAD</sequence>